<gene>
    <name type="primary">RpL11</name>
    <name type="synonym">RPL11A</name>
    <name type="ORF">CG7726</name>
</gene>
<accession>P46222</accession>
<accession>Q9V8U9</accession>
<evidence type="ECO:0000250" key="1">
    <source>
        <dbReference type="UniProtKB" id="P0C0W9"/>
    </source>
</evidence>
<evidence type="ECO:0000269" key="2">
    <source>
    </source>
</evidence>
<evidence type="ECO:0000305" key="3"/>
<comment type="function">
    <text evidence="1">Component of the ribosome, a large ribonucleoprotein complex responsible for the synthesis of proteins in the cell. The small ribosomal subunit (SSU) binds messenger RNAs (mRNAs) and translates the encoded message by selecting cognate aminoacyl-transfer RNA (tRNA) molecules. The large subunit (LSU) contains the ribosomal catalytic site termed the peptidyl transferase center (PTC), which catalyzes the formation of peptide bonds, thereby polymerizing the amino acids delivered by tRNAs into a polypeptide chain. The nascent polypeptides leave the ribosome through a tunnel in the LSU and interact with protein factors that function in enzymatic processing, targeting, and the membrane insertion of nascent chains at the exit of the ribosomal tunnel.</text>
</comment>
<comment type="subunit">
    <text evidence="1 2">Component of the large ribosomal subunit (By similarity). Interacts with Fmr1 to form the RNA-induced silencing complex (RISC), a ribonucleoprotein (RNP) complex involved in translation regulation, other components of the complex are RpL5, Rm62, AGO2 and Dcr-1 (PubMed:12368261).</text>
</comment>
<comment type="interaction">
    <interactant intactId="EBI-183104">
        <id>P46222</id>
    </interactant>
    <interactant intactId="EBI-422631">
        <id>Q9NFU0</id>
        <label>Fmr1</label>
    </interactant>
    <organismsDiffer>false</organismsDiffer>
    <experiments>5</experiments>
</comment>
<comment type="subcellular location">
    <subcellularLocation>
        <location evidence="1">Nucleus</location>
    </subcellularLocation>
    <subcellularLocation>
        <location evidence="1">Cytoplasm</location>
    </subcellularLocation>
</comment>
<comment type="similarity">
    <text evidence="3">Belongs to the universal ribosomal protein uL5 family.</text>
</comment>
<sequence length="184" mass="21112">MAAVTKKIKRDPAKNPMRDLHIRKLCLNICVGESGDRLTRAAKVLEQLTGQQPVFSKARYTVRSFGIRRNEKIAVHCTVRGAKAEEILERGLKVREYELRRENFSSTGNFGFGIQEHIDLGIKYDPSIGIYGLDFYVVLGRPGYNVNHRKRKSGTVGFQHRLTKEDAMKWFQQKYDGIILNTKK</sequence>
<name>RL11_DROME</name>
<organism>
    <name type="scientific">Drosophila melanogaster</name>
    <name type="common">Fruit fly</name>
    <dbReference type="NCBI Taxonomy" id="7227"/>
    <lineage>
        <taxon>Eukaryota</taxon>
        <taxon>Metazoa</taxon>
        <taxon>Ecdysozoa</taxon>
        <taxon>Arthropoda</taxon>
        <taxon>Hexapoda</taxon>
        <taxon>Insecta</taxon>
        <taxon>Pterygota</taxon>
        <taxon>Neoptera</taxon>
        <taxon>Endopterygota</taxon>
        <taxon>Diptera</taxon>
        <taxon>Brachycera</taxon>
        <taxon>Muscomorpha</taxon>
        <taxon>Ephydroidea</taxon>
        <taxon>Drosophilidae</taxon>
        <taxon>Drosophila</taxon>
        <taxon>Sophophora</taxon>
    </lineage>
</organism>
<reference key="1">
    <citation type="journal article" date="1995" name="Biochim. Biophys. Acta">
        <title>Molecular cloning of the Drosophila homologue of the rat ribosomal protein L11 gene.</title>
        <authorList>
            <person name="Larochelle S."/>
            <person name="Suter B."/>
        </authorList>
    </citation>
    <scope>NUCLEOTIDE SEQUENCE [MRNA]</scope>
    <source>
        <strain>Oregon-R</strain>
    </source>
</reference>
<reference key="2">
    <citation type="journal article" date="2000" name="Science">
        <title>The genome sequence of Drosophila melanogaster.</title>
        <authorList>
            <person name="Adams M.D."/>
            <person name="Celniker S.E."/>
            <person name="Holt R.A."/>
            <person name="Evans C.A."/>
            <person name="Gocayne J.D."/>
            <person name="Amanatides P.G."/>
            <person name="Scherer S.E."/>
            <person name="Li P.W."/>
            <person name="Hoskins R.A."/>
            <person name="Galle R.F."/>
            <person name="George R.A."/>
            <person name="Lewis S.E."/>
            <person name="Richards S."/>
            <person name="Ashburner M."/>
            <person name="Henderson S.N."/>
            <person name="Sutton G.G."/>
            <person name="Wortman J.R."/>
            <person name="Yandell M.D."/>
            <person name="Zhang Q."/>
            <person name="Chen L.X."/>
            <person name="Brandon R.C."/>
            <person name="Rogers Y.-H.C."/>
            <person name="Blazej R.G."/>
            <person name="Champe M."/>
            <person name="Pfeiffer B.D."/>
            <person name="Wan K.H."/>
            <person name="Doyle C."/>
            <person name="Baxter E.G."/>
            <person name="Helt G."/>
            <person name="Nelson C.R."/>
            <person name="Miklos G.L.G."/>
            <person name="Abril J.F."/>
            <person name="Agbayani A."/>
            <person name="An H.-J."/>
            <person name="Andrews-Pfannkoch C."/>
            <person name="Baldwin D."/>
            <person name="Ballew R.M."/>
            <person name="Basu A."/>
            <person name="Baxendale J."/>
            <person name="Bayraktaroglu L."/>
            <person name="Beasley E.M."/>
            <person name="Beeson K.Y."/>
            <person name="Benos P.V."/>
            <person name="Berman B.P."/>
            <person name="Bhandari D."/>
            <person name="Bolshakov S."/>
            <person name="Borkova D."/>
            <person name="Botchan M.R."/>
            <person name="Bouck J."/>
            <person name="Brokstein P."/>
            <person name="Brottier P."/>
            <person name="Burtis K.C."/>
            <person name="Busam D.A."/>
            <person name="Butler H."/>
            <person name="Cadieu E."/>
            <person name="Center A."/>
            <person name="Chandra I."/>
            <person name="Cherry J.M."/>
            <person name="Cawley S."/>
            <person name="Dahlke C."/>
            <person name="Davenport L.B."/>
            <person name="Davies P."/>
            <person name="de Pablos B."/>
            <person name="Delcher A."/>
            <person name="Deng Z."/>
            <person name="Mays A.D."/>
            <person name="Dew I."/>
            <person name="Dietz S.M."/>
            <person name="Dodson K."/>
            <person name="Doup L.E."/>
            <person name="Downes M."/>
            <person name="Dugan-Rocha S."/>
            <person name="Dunkov B.C."/>
            <person name="Dunn P."/>
            <person name="Durbin K.J."/>
            <person name="Evangelista C.C."/>
            <person name="Ferraz C."/>
            <person name="Ferriera S."/>
            <person name="Fleischmann W."/>
            <person name="Fosler C."/>
            <person name="Gabrielian A.E."/>
            <person name="Garg N.S."/>
            <person name="Gelbart W.M."/>
            <person name="Glasser K."/>
            <person name="Glodek A."/>
            <person name="Gong F."/>
            <person name="Gorrell J.H."/>
            <person name="Gu Z."/>
            <person name="Guan P."/>
            <person name="Harris M."/>
            <person name="Harris N.L."/>
            <person name="Harvey D.A."/>
            <person name="Heiman T.J."/>
            <person name="Hernandez J.R."/>
            <person name="Houck J."/>
            <person name="Hostin D."/>
            <person name="Houston K.A."/>
            <person name="Howland T.J."/>
            <person name="Wei M.-H."/>
            <person name="Ibegwam C."/>
            <person name="Jalali M."/>
            <person name="Kalush F."/>
            <person name="Karpen G.H."/>
            <person name="Ke Z."/>
            <person name="Kennison J.A."/>
            <person name="Ketchum K.A."/>
            <person name="Kimmel B.E."/>
            <person name="Kodira C.D."/>
            <person name="Kraft C.L."/>
            <person name="Kravitz S."/>
            <person name="Kulp D."/>
            <person name="Lai Z."/>
            <person name="Lasko P."/>
            <person name="Lei Y."/>
            <person name="Levitsky A.A."/>
            <person name="Li J.H."/>
            <person name="Li Z."/>
            <person name="Liang Y."/>
            <person name="Lin X."/>
            <person name="Liu X."/>
            <person name="Mattei B."/>
            <person name="McIntosh T.C."/>
            <person name="McLeod M.P."/>
            <person name="McPherson D."/>
            <person name="Merkulov G."/>
            <person name="Milshina N.V."/>
            <person name="Mobarry C."/>
            <person name="Morris J."/>
            <person name="Moshrefi A."/>
            <person name="Mount S.M."/>
            <person name="Moy M."/>
            <person name="Murphy B."/>
            <person name="Murphy L."/>
            <person name="Muzny D.M."/>
            <person name="Nelson D.L."/>
            <person name="Nelson D.R."/>
            <person name="Nelson K.A."/>
            <person name="Nixon K."/>
            <person name="Nusskern D.R."/>
            <person name="Pacleb J.M."/>
            <person name="Palazzolo M."/>
            <person name="Pittman G.S."/>
            <person name="Pan S."/>
            <person name="Pollard J."/>
            <person name="Puri V."/>
            <person name="Reese M.G."/>
            <person name="Reinert K."/>
            <person name="Remington K."/>
            <person name="Saunders R.D.C."/>
            <person name="Scheeler F."/>
            <person name="Shen H."/>
            <person name="Shue B.C."/>
            <person name="Siden-Kiamos I."/>
            <person name="Simpson M."/>
            <person name="Skupski M.P."/>
            <person name="Smith T.J."/>
            <person name="Spier E."/>
            <person name="Spradling A.C."/>
            <person name="Stapleton M."/>
            <person name="Strong R."/>
            <person name="Sun E."/>
            <person name="Svirskas R."/>
            <person name="Tector C."/>
            <person name="Turner R."/>
            <person name="Venter E."/>
            <person name="Wang A.H."/>
            <person name="Wang X."/>
            <person name="Wang Z.-Y."/>
            <person name="Wassarman D.A."/>
            <person name="Weinstock G.M."/>
            <person name="Weissenbach J."/>
            <person name="Williams S.M."/>
            <person name="Woodage T."/>
            <person name="Worley K.C."/>
            <person name="Wu D."/>
            <person name="Yang S."/>
            <person name="Yao Q.A."/>
            <person name="Ye J."/>
            <person name="Yeh R.-F."/>
            <person name="Zaveri J.S."/>
            <person name="Zhan M."/>
            <person name="Zhang G."/>
            <person name="Zhao Q."/>
            <person name="Zheng L."/>
            <person name="Zheng X.H."/>
            <person name="Zhong F.N."/>
            <person name="Zhong W."/>
            <person name="Zhou X."/>
            <person name="Zhu S.C."/>
            <person name="Zhu X."/>
            <person name="Smith H.O."/>
            <person name="Gibbs R.A."/>
            <person name="Myers E.W."/>
            <person name="Rubin G.M."/>
            <person name="Venter J.C."/>
        </authorList>
    </citation>
    <scope>NUCLEOTIDE SEQUENCE [LARGE SCALE GENOMIC DNA]</scope>
    <source>
        <strain>Berkeley</strain>
    </source>
</reference>
<reference key="3">
    <citation type="journal article" date="2002" name="Genome Biol.">
        <title>Annotation of the Drosophila melanogaster euchromatic genome: a systematic review.</title>
        <authorList>
            <person name="Misra S."/>
            <person name="Crosby M.A."/>
            <person name="Mungall C.J."/>
            <person name="Matthews B.B."/>
            <person name="Campbell K.S."/>
            <person name="Hradecky P."/>
            <person name="Huang Y."/>
            <person name="Kaminker J.S."/>
            <person name="Millburn G.H."/>
            <person name="Prochnik S.E."/>
            <person name="Smith C.D."/>
            <person name="Tupy J.L."/>
            <person name="Whitfield E.J."/>
            <person name="Bayraktaroglu L."/>
            <person name="Berman B.P."/>
            <person name="Bettencourt B.R."/>
            <person name="Celniker S.E."/>
            <person name="de Grey A.D.N.J."/>
            <person name="Drysdale R.A."/>
            <person name="Harris N.L."/>
            <person name="Richter J."/>
            <person name="Russo S."/>
            <person name="Schroeder A.J."/>
            <person name="Shu S.Q."/>
            <person name="Stapleton M."/>
            <person name="Yamada C."/>
            <person name="Ashburner M."/>
            <person name="Gelbart W.M."/>
            <person name="Rubin G.M."/>
            <person name="Lewis S.E."/>
        </authorList>
    </citation>
    <scope>GENOME REANNOTATION</scope>
    <source>
        <strain>Berkeley</strain>
    </source>
</reference>
<reference key="4">
    <citation type="journal article" date="2002" name="Genome Biol.">
        <title>A Drosophila full-length cDNA resource.</title>
        <authorList>
            <person name="Stapleton M."/>
            <person name="Carlson J.W."/>
            <person name="Brokstein P."/>
            <person name="Yu C."/>
            <person name="Champe M."/>
            <person name="George R.A."/>
            <person name="Guarin H."/>
            <person name="Kronmiller B."/>
            <person name="Pacleb J.M."/>
            <person name="Park S."/>
            <person name="Wan K.H."/>
            <person name="Rubin G.M."/>
            <person name="Celniker S.E."/>
        </authorList>
    </citation>
    <scope>NUCLEOTIDE SEQUENCE [LARGE SCALE MRNA]</scope>
    <source>
        <strain>Berkeley</strain>
        <tissue>Embryo</tissue>
    </source>
</reference>
<reference key="5">
    <citation type="journal article" date="2002" name="Genes Dev.">
        <title>A Drosophila fragile X protein interacts with components of RNAi and ribosomal proteins.</title>
        <authorList>
            <person name="Ishizuka A."/>
            <person name="Siomi M.C."/>
            <person name="Siomi H."/>
        </authorList>
    </citation>
    <scope>INTERACTION WITH FMR1</scope>
</reference>
<reference key="6">
    <citation type="journal article" date="2013" name="Nature">
        <title>Structures of the human and Drosophila 80S ribosome.</title>
        <authorList>
            <person name="Anger A.M."/>
            <person name="Armache J.P."/>
            <person name="Berninghausen O."/>
            <person name="Habeck M."/>
            <person name="Subklewe M."/>
            <person name="Wilson D.N."/>
            <person name="Beckmann R."/>
        </authorList>
    </citation>
    <scope>STRUCTURE BY ELECTRON MICROSCOPY (6.0 ANGSTROMS) OF THE 80S RIBOSOME</scope>
</reference>
<protein>
    <recommendedName>
        <fullName evidence="3">Large ribosomal subunit protein uL5</fullName>
    </recommendedName>
    <alternativeName>
        <fullName>60S ribosomal protein L11</fullName>
    </alternativeName>
</protein>
<keyword id="KW-0002">3D-structure</keyword>
<keyword id="KW-0963">Cytoplasm</keyword>
<keyword id="KW-0539">Nucleus</keyword>
<keyword id="KW-1185">Reference proteome</keyword>
<keyword id="KW-0687">Ribonucleoprotein</keyword>
<keyword id="KW-0689">Ribosomal protein</keyword>
<keyword id="KW-0694">RNA-binding</keyword>
<keyword id="KW-0699">rRNA-binding</keyword>
<feature type="chain" id="PRO_0000125089" description="Large ribosomal subunit protein uL5">
    <location>
        <begin position="1"/>
        <end position="184"/>
    </location>
</feature>
<feature type="sequence conflict" description="In Ref. 1; AAC46585." evidence="3" ref="1">
    <original>KNPMR</original>
    <variation>QEPDE</variation>
    <location>
        <begin position="14"/>
        <end position="18"/>
    </location>
</feature>
<dbReference type="EMBL" id="U15643">
    <property type="protein sequence ID" value="AAC46585.1"/>
    <property type="molecule type" value="mRNA"/>
</dbReference>
<dbReference type="EMBL" id="AE013599">
    <property type="protein sequence ID" value="AAF57560.1"/>
    <property type="molecule type" value="Genomic_DNA"/>
</dbReference>
<dbReference type="EMBL" id="AY094790">
    <property type="protein sequence ID" value="AAM11143.1"/>
    <property type="molecule type" value="mRNA"/>
</dbReference>
<dbReference type="PIR" id="S60245">
    <property type="entry name" value="S60245"/>
</dbReference>
<dbReference type="RefSeq" id="NP_001286614.1">
    <property type="nucleotide sequence ID" value="NM_001299685.1"/>
</dbReference>
<dbReference type="RefSeq" id="NP_477054.1">
    <property type="nucleotide sequence ID" value="NM_057706.5"/>
</dbReference>
<dbReference type="PDB" id="4V6W">
    <property type="method" value="EM"/>
    <property type="resolution" value="6.00 A"/>
    <property type="chains" value="CJ=1-184"/>
</dbReference>
<dbReference type="PDB" id="6XU6">
    <property type="method" value="EM"/>
    <property type="resolution" value="3.50 A"/>
    <property type="chains" value="CJ=1-182"/>
</dbReference>
<dbReference type="PDB" id="6XU7">
    <property type="method" value="EM"/>
    <property type="resolution" value="4.90 A"/>
    <property type="chains" value="CJ=1-182"/>
</dbReference>
<dbReference type="PDB" id="6XU8">
    <property type="method" value="EM"/>
    <property type="resolution" value="3.00 A"/>
    <property type="chains" value="CJ=1-182"/>
</dbReference>
<dbReference type="PDBsum" id="4V6W"/>
<dbReference type="PDBsum" id="6XU6"/>
<dbReference type="PDBsum" id="6XU7"/>
<dbReference type="PDBsum" id="6XU8"/>
<dbReference type="EMDB" id="EMD-10622"/>
<dbReference type="EMDB" id="EMD-10623"/>
<dbReference type="EMDB" id="EMD-10624"/>
<dbReference type="SMR" id="P46222"/>
<dbReference type="BioGRID" id="62897">
    <property type="interactions" value="96"/>
</dbReference>
<dbReference type="DIP" id="DIP-18297N"/>
<dbReference type="FunCoup" id="P46222">
    <property type="interactions" value="1439"/>
</dbReference>
<dbReference type="IntAct" id="P46222">
    <property type="interactions" value="4"/>
</dbReference>
<dbReference type="MINT" id="P46222"/>
<dbReference type="STRING" id="7227.FBpp0309436"/>
<dbReference type="PaxDb" id="7227-FBpp0085717"/>
<dbReference type="DNASU" id="37235"/>
<dbReference type="EnsemblMetazoa" id="FBtr0086533">
    <property type="protein sequence ID" value="FBpp0085717"/>
    <property type="gene ID" value="FBgn0013325"/>
</dbReference>
<dbReference type="EnsemblMetazoa" id="FBtr0340533">
    <property type="protein sequence ID" value="FBpp0309436"/>
    <property type="gene ID" value="FBgn0013325"/>
</dbReference>
<dbReference type="GeneID" id="37235"/>
<dbReference type="KEGG" id="dme:Dmel_CG7726"/>
<dbReference type="AGR" id="FB:FBgn0013325"/>
<dbReference type="CTD" id="6135"/>
<dbReference type="FlyBase" id="FBgn0013325">
    <property type="gene designation" value="RpL11"/>
</dbReference>
<dbReference type="VEuPathDB" id="VectorBase:FBgn0013325"/>
<dbReference type="eggNOG" id="KOG0397">
    <property type="taxonomic scope" value="Eukaryota"/>
</dbReference>
<dbReference type="GeneTree" id="ENSGT00910000144211"/>
<dbReference type="HOGENOM" id="CLU_061015_3_0_1"/>
<dbReference type="InParanoid" id="P46222"/>
<dbReference type="OMA" id="NPMKELK"/>
<dbReference type="OrthoDB" id="1734943at2759"/>
<dbReference type="PhylomeDB" id="P46222"/>
<dbReference type="Reactome" id="R-DME-156827">
    <property type="pathway name" value="L13a-mediated translational silencing of Ceruloplasmin expression"/>
</dbReference>
<dbReference type="Reactome" id="R-DME-1799339">
    <property type="pathway name" value="SRP-dependent cotranslational protein targeting to membrane"/>
</dbReference>
<dbReference type="Reactome" id="R-DME-72689">
    <property type="pathway name" value="Formation of a pool of free 40S subunits"/>
</dbReference>
<dbReference type="Reactome" id="R-DME-72706">
    <property type="pathway name" value="GTP hydrolysis and joining of the 60S ribosomal subunit"/>
</dbReference>
<dbReference type="Reactome" id="R-DME-975956">
    <property type="pathway name" value="Nonsense Mediated Decay (NMD) independent of the Exon Junction Complex (EJC)"/>
</dbReference>
<dbReference type="Reactome" id="R-DME-975957">
    <property type="pathway name" value="Nonsense Mediated Decay (NMD) enhanced by the Exon Junction Complex (EJC)"/>
</dbReference>
<dbReference type="SignaLink" id="P46222"/>
<dbReference type="BioGRID-ORCS" id="37235">
    <property type="hits" value="0 hits in 1 CRISPR screen"/>
</dbReference>
<dbReference type="ChiTaRS" id="RpL11">
    <property type="organism name" value="fly"/>
</dbReference>
<dbReference type="GenomeRNAi" id="37235"/>
<dbReference type="PRO" id="PR:P46222"/>
<dbReference type="Proteomes" id="UP000000803">
    <property type="component" value="Chromosome 2R"/>
</dbReference>
<dbReference type="Bgee" id="FBgn0013325">
    <property type="expression patterns" value="Expressed in adult enteroendocrine precursor cell in adult midgut (Drosophila) and 269 other cell types or tissues"/>
</dbReference>
<dbReference type="ExpressionAtlas" id="P46222">
    <property type="expression patterns" value="baseline and differential"/>
</dbReference>
<dbReference type="GO" id="GO:0005737">
    <property type="term" value="C:cytoplasm"/>
    <property type="evidence" value="ECO:0000314"/>
    <property type="project" value="FlyBase"/>
</dbReference>
<dbReference type="GO" id="GO:0022625">
    <property type="term" value="C:cytosolic large ribosomal subunit"/>
    <property type="evidence" value="ECO:0000318"/>
    <property type="project" value="GO_Central"/>
</dbReference>
<dbReference type="GO" id="GO:0022626">
    <property type="term" value="C:cytosolic ribosome"/>
    <property type="evidence" value="ECO:0000314"/>
    <property type="project" value="FlyBase"/>
</dbReference>
<dbReference type="GO" id="GO:0005730">
    <property type="term" value="C:nucleolus"/>
    <property type="evidence" value="ECO:0000314"/>
    <property type="project" value="FlyBase"/>
</dbReference>
<dbReference type="GO" id="GO:0003723">
    <property type="term" value="F:RNA binding"/>
    <property type="evidence" value="ECO:0000318"/>
    <property type="project" value="GO_Central"/>
</dbReference>
<dbReference type="GO" id="GO:0019843">
    <property type="term" value="F:rRNA binding"/>
    <property type="evidence" value="ECO:0007669"/>
    <property type="project" value="UniProtKB-KW"/>
</dbReference>
<dbReference type="GO" id="GO:0003735">
    <property type="term" value="F:structural constituent of ribosome"/>
    <property type="evidence" value="ECO:0000314"/>
    <property type="project" value="FlyBase"/>
</dbReference>
<dbReference type="GO" id="GO:0002181">
    <property type="term" value="P:cytoplasmic translation"/>
    <property type="evidence" value="ECO:0000304"/>
    <property type="project" value="FlyBase"/>
</dbReference>
<dbReference type="GO" id="GO:0006412">
    <property type="term" value="P:translation"/>
    <property type="evidence" value="ECO:0000318"/>
    <property type="project" value="GO_Central"/>
</dbReference>
<dbReference type="FunFam" id="3.30.1440.10:FF:000002">
    <property type="entry name" value="60S ribosomal protein L11"/>
    <property type="match status" value="1"/>
</dbReference>
<dbReference type="Gene3D" id="3.30.1440.10">
    <property type="match status" value="1"/>
</dbReference>
<dbReference type="InterPro" id="IPR002132">
    <property type="entry name" value="Ribosomal_uL5"/>
</dbReference>
<dbReference type="InterPro" id="IPR031309">
    <property type="entry name" value="Ribosomal_uL5_C"/>
</dbReference>
<dbReference type="InterPro" id="IPR020929">
    <property type="entry name" value="Ribosomal_uL5_CS"/>
</dbReference>
<dbReference type="InterPro" id="IPR022803">
    <property type="entry name" value="Ribosomal_uL5_dom_sf"/>
</dbReference>
<dbReference type="InterPro" id="IPR031310">
    <property type="entry name" value="Ribosomal_uL5_N"/>
</dbReference>
<dbReference type="NCBIfam" id="NF003258">
    <property type="entry name" value="PRK04219.1"/>
    <property type="match status" value="1"/>
</dbReference>
<dbReference type="PANTHER" id="PTHR11994">
    <property type="entry name" value="60S RIBOSOMAL PROTEIN L11-RELATED"/>
    <property type="match status" value="1"/>
</dbReference>
<dbReference type="Pfam" id="PF00281">
    <property type="entry name" value="Ribosomal_L5"/>
    <property type="match status" value="1"/>
</dbReference>
<dbReference type="Pfam" id="PF00673">
    <property type="entry name" value="Ribosomal_L5_C"/>
    <property type="match status" value="1"/>
</dbReference>
<dbReference type="PIRSF" id="PIRSF002161">
    <property type="entry name" value="Ribosomal_L5"/>
    <property type="match status" value="1"/>
</dbReference>
<dbReference type="SUPFAM" id="SSF55282">
    <property type="entry name" value="RL5-like"/>
    <property type="match status" value="1"/>
</dbReference>
<dbReference type="PROSITE" id="PS00358">
    <property type="entry name" value="RIBOSOMAL_L5"/>
    <property type="match status" value="1"/>
</dbReference>
<proteinExistence type="evidence at protein level"/>